<evidence type="ECO:0000255" key="1">
    <source>
        <dbReference type="HAMAP-Rule" id="MF_01334"/>
    </source>
</evidence>
<evidence type="ECO:0000305" key="2"/>
<organism>
    <name type="scientific">Neisseria meningitidis serogroup A / serotype 4A (strain DSM 15465 / Z2491)</name>
    <dbReference type="NCBI Taxonomy" id="122587"/>
    <lineage>
        <taxon>Bacteria</taxon>
        <taxon>Pseudomonadati</taxon>
        <taxon>Pseudomonadota</taxon>
        <taxon>Betaproteobacteria</taxon>
        <taxon>Neisseriales</taxon>
        <taxon>Neisseriaceae</taxon>
        <taxon>Neisseria</taxon>
    </lineage>
</organism>
<reference key="1">
    <citation type="journal article" date="2000" name="Nature">
        <title>Complete DNA sequence of a serogroup A strain of Neisseria meningitidis Z2491.</title>
        <authorList>
            <person name="Parkhill J."/>
            <person name="Achtman M."/>
            <person name="James K.D."/>
            <person name="Bentley S.D."/>
            <person name="Churcher C.M."/>
            <person name="Klee S.R."/>
            <person name="Morelli G."/>
            <person name="Basham D."/>
            <person name="Brown D."/>
            <person name="Chillingworth T."/>
            <person name="Davies R.M."/>
            <person name="Davis P."/>
            <person name="Devlin K."/>
            <person name="Feltwell T."/>
            <person name="Hamlin N."/>
            <person name="Holroyd S."/>
            <person name="Jagels K."/>
            <person name="Leather S."/>
            <person name="Moule S."/>
            <person name="Mungall K.L."/>
            <person name="Quail M.A."/>
            <person name="Rajandream M.A."/>
            <person name="Rutherford K.M."/>
            <person name="Simmonds M."/>
            <person name="Skelton J."/>
            <person name="Whitehead S."/>
            <person name="Spratt B.G."/>
            <person name="Barrell B.G."/>
        </authorList>
    </citation>
    <scope>NUCLEOTIDE SEQUENCE [LARGE SCALE GENOMIC DNA]</scope>
    <source>
        <strain>DSM 15465 / Z2491</strain>
    </source>
</reference>
<feature type="chain" id="PRO_0000181572" description="Large ribosomal subunit protein bL25">
    <location>
        <begin position="1"/>
        <end position="190"/>
    </location>
</feature>
<protein>
    <recommendedName>
        <fullName evidence="1">Large ribosomal subunit protein bL25</fullName>
    </recommendedName>
    <alternativeName>
        <fullName evidence="2">50S ribosomal protein L25</fullName>
    </alternativeName>
    <alternativeName>
        <fullName evidence="1">General stress protein CTC</fullName>
    </alternativeName>
</protein>
<comment type="function">
    <text evidence="1">This is one of the proteins that binds to the 5S RNA in the ribosome where it forms part of the central protuberance.</text>
</comment>
<comment type="subunit">
    <text evidence="1">Part of the 50S ribosomal subunit; part of the 5S rRNA/L5/L18/L25 subcomplex. Contacts the 5S rRNA. Binds to the 5S rRNA independently of L5 and L18.</text>
</comment>
<comment type="similarity">
    <text evidence="1">Belongs to the bacterial ribosomal protein bL25 family. CTC subfamily.</text>
</comment>
<gene>
    <name evidence="1" type="primary">rplY</name>
    <name evidence="1" type="synonym">ctc</name>
    <name type="ordered locus">NMA1094</name>
</gene>
<name>RL25_NEIMA</name>
<sequence>MTYEIQASVREAQGTGASRRLRREGQIPGILYGEGQEPVAIAVDHKTVFYALEKESFHTALIKLSLNGETKDVIVRDFQMHPFRREVQHIDFQAVKADQPVRIRVPLHIVNAENSQAVKLQGGRVSLLNTTVEVVALPANIPAFLDLDCAEVVAGDILHLSDIKLPEGVESVSLKRNENLAVATVTGKKR</sequence>
<dbReference type="EMBL" id="AL157959">
    <property type="protein sequence ID" value="CAM08305.1"/>
    <property type="molecule type" value="Genomic_DNA"/>
</dbReference>
<dbReference type="PIR" id="C81875">
    <property type="entry name" value="C81875"/>
</dbReference>
<dbReference type="RefSeq" id="WP_002241400.1">
    <property type="nucleotide sequence ID" value="NC_003116.1"/>
</dbReference>
<dbReference type="SMR" id="Q9JUX7"/>
<dbReference type="EnsemblBacteria" id="CAM08305">
    <property type="protein sequence ID" value="CAM08305"/>
    <property type="gene ID" value="NMA1094"/>
</dbReference>
<dbReference type="KEGG" id="nma:NMA1094"/>
<dbReference type="HOGENOM" id="CLU_075939_0_1_4"/>
<dbReference type="Proteomes" id="UP000000626">
    <property type="component" value="Chromosome"/>
</dbReference>
<dbReference type="GO" id="GO:0022625">
    <property type="term" value="C:cytosolic large ribosomal subunit"/>
    <property type="evidence" value="ECO:0007669"/>
    <property type="project" value="TreeGrafter"/>
</dbReference>
<dbReference type="GO" id="GO:0008097">
    <property type="term" value="F:5S rRNA binding"/>
    <property type="evidence" value="ECO:0007669"/>
    <property type="project" value="InterPro"/>
</dbReference>
<dbReference type="GO" id="GO:0003735">
    <property type="term" value="F:structural constituent of ribosome"/>
    <property type="evidence" value="ECO:0007669"/>
    <property type="project" value="InterPro"/>
</dbReference>
<dbReference type="GO" id="GO:0006412">
    <property type="term" value="P:translation"/>
    <property type="evidence" value="ECO:0007669"/>
    <property type="project" value="UniProtKB-UniRule"/>
</dbReference>
<dbReference type="CDD" id="cd00495">
    <property type="entry name" value="Ribosomal_L25_TL5_CTC"/>
    <property type="match status" value="1"/>
</dbReference>
<dbReference type="FunFam" id="2.170.120.20:FF:000003">
    <property type="entry name" value="50S ribosomal protein L25"/>
    <property type="match status" value="1"/>
</dbReference>
<dbReference type="FunFam" id="2.40.240.10:FF:000002">
    <property type="entry name" value="50S ribosomal protein L25"/>
    <property type="match status" value="1"/>
</dbReference>
<dbReference type="Gene3D" id="2.170.120.20">
    <property type="entry name" value="Ribosomal protein L25, beta domain"/>
    <property type="match status" value="1"/>
</dbReference>
<dbReference type="Gene3D" id="2.40.240.10">
    <property type="entry name" value="Ribosomal Protein L25, Chain P"/>
    <property type="match status" value="1"/>
</dbReference>
<dbReference type="HAMAP" id="MF_01336">
    <property type="entry name" value="Ribosomal_bL25"/>
    <property type="match status" value="1"/>
</dbReference>
<dbReference type="HAMAP" id="MF_01334">
    <property type="entry name" value="Ribosomal_bL25_CTC"/>
    <property type="match status" value="1"/>
</dbReference>
<dbReference type="InterPro" id="IPR020056">
    <property type="entry name" value="Rbsml_bL25/Gln-tRNA_synth_N"/>
</dbReference>
<dbReference type="InterPro" id="IPR011035">
    <property type="entry name" value="Ribosomal_bL25/Gln-tRNA_synth"/>
</dbReference>
<dbReference type="InterPro" id="IPR020057">
    <property type="entry name" value="Ribosomal_bL25_b-dom"/>
</dbReference>
<dbReference type="InterPro" id="IPR037121">
    <property type="entry name" value="Ribosomal_bL25_C"/>
</dbReference>
<dbReference type="InterPro" id="IPR001021">
    <property type="entry name" value="Ribosomal_bL25_long"/>
</dbReference>
<dbReference type="InterPro" id="IPR020055">
    <property type="entry name" value="Ribosomal_bL25_short"/>
</dbReference>
<dbReference type="InterPro" id="IPR029751">
    <property type="entry name" value="Ribosomal_L25_dom"/>
</dbReference>
<dbReference type="InterPro" id="IPR020930">
    <property type="entry name" value="Ribosomal_uL5_bac-type"/>
</dbReference>
<dbReference type="NCBIfam" id="TIGR00731">
    <property type="entry name" value="bL25_bact_ctc"/>
    <property type="match status" value="1"/>
</dbReference>
<dbReference type="NCBIfam" id="NF004128">
    <property type="entry name" value="PRK05618.1-2"/>
    <property type="match status" value="1"/>
</dbReference>
<dbReference type="NCBIfam" id="NF004130">
    <property type="entry name" value="PRK05618.1-5"/>
    <property type="match status" value="1"/>
</dbReference>
<dbReference type="NCBIfam" id="NF004612">
    <property type="entry name" value="PRK05943.1"/>
    <property type="match status" value="1"/>
</dbReference>
<dbReference type="PANTHER" id="PTHR33284">
    <property type="entry name" value="RIBOSOMAL PROTEIN L25/GLN-TRNA SYNTHETASE, ANTI-CODON-BINDING DOMAIN-CONTAINING PROTEIN"/>
    <property type="match status" value="1"/>
</dbReference>
<dbReference type="PANTHER" id="PTHR33284:SF1">
    <property type="entry name" value="RIBOSOMAL PROTEIN L25_GLN-TRNA SYNTHETASE, ANTI-CODON-BINDING DOMAIN-CONTAINING PROTEIN"/>
    <property type="match status" value="1"/>
</dbReference>
<dbReference type="Pfam" id="PF01386">
    <property type="entry name" value="Ribosomal_L25p"/>
    <property type="match status" value="1"/>
</dbReference>
<dbReference type="Pfam" id="PF14693">
    <property type="entry name" value="Ribosomal_TL5_C"/>
    <property type="match status" value="1"/>
</dbReference>
<dbReference type="SUPFAM" id="SSF50715">
    <property type="entry name" value="Ribosomal protein L25-like"/>
    <property type="match status" value="1"/>
</dbReference>
<proteinExistence type="inferred from homology"/>
<accession>Q9JUX7</accession>
<accession>A1IRB9</accession>
<keyword id="KW-0687">Ribonucleoprotein</keyword>
<keyword id="KW-0689">Ribosomal protein</keyword>
<keyword id="KW-0694">RNA-binding</keyword>
<keyword id="KW-0699">rRNA-binding</keyword>